<reference key="1">
    <citation type="submission" date="2003-10" db="EMBL/GenBank/DDBJ databases">
        <title>The complete genome sequence of the alkaliphilic Bacillus clausii KSM-K16.</title>
        <authorList>
            <person name="Takaki Y."/>
            <person name="Kageyama Y."/>
            <person name="Shimamura S."/>
            <person name="Suzuki H."/>
            <person name="Nishi S."/>
            <person name="Hatada Y."/>
            <person name="Kawai S."/>
            <person name="Ito S."/>
            <person name="Horikoshi K."/>
        </authorList>
    </citation>
    <scope>NUCLEOTIDE SEQUENCE [LARGE SCALE GENOMIC DNA]</scope>
    <source>
        <strain>KSM-K16</strain>
    </source>
</reference>
<dbReference type="EC" id="5.3.1.6" evidence="1"/>
<dbReference type="EMBL" id="AP006627">
    <property type="protein sequence ID" value="BAD65886.1"/>
    <property type="molecule type" value="Genomic_DNA"/>
</dbReference>
<dbReference type="RefSeq" id="WP_011248192.1">
    <property type="nucleotide sequence ID" value="NC_006582.1"/>
</dbReference>
<dbReference type="SMR" id="Q5WCM4"/>
<dbReference type="STRING" id="66692.ABC3353"/>
<dbReference type="KEGG" id="bcl:ABC3353"/>
<dbReference type="eggNOG" id="COG0120">
    <property type="taxonomic scope" value="Bacteria"/>
</dbReference>
<dbReference type="HOGENOM" id="CLU_056590_1_0_9"/>
<dbReference type="OrthoDB" id="5870696at2"/>
<dbReference type="UniPathway" id="UPA00115">
    <property type="reaction ID" value="UER00412"/>
</dbReference>
<dbReference type="Proteomes" id="UP000001168">
    <property type="component" value="Chromosome"/>
</dbReference>
<dbReference type="GO" id="GO:0005829">
    <property type="term" value="C:cytosol"/>
    <property type="evidence" value="ECO:0007669"/>
    <property type="project" value="TreeGrafter"/>
</dbReference>
<dbReference type="GO" id="GO:0004751">
    <property type="term" value="F:ribose-5-phosphate isomerase activity"/>
    <property type="evidence" value="ECO:0007669"/>
    <property type="project" value="UniProtKB-UniRule"/>
</dbReference>
<dbReference type="GO" id="GO:0006014">
    <property type="term" value="P:D-ribose metabolic process"/>
    <property type="evidence" value="ECO:0007669"/>
    <property type="project" value="TreeGrafter"/>
</dbReference>
<dbReference type="GO" id="GO:0009052">
    <property type="term" value="P:pentose-phosphate shunt, non-oxidative branch"/>
    <property type="evidence" value="ECO:0007669"/>
    <property type="project" value="UniProtKB-UniRule"/>
</dbReference>
<dbReference type="CDD" id="cd01398">
    <property type="entry name" value="RPI_A"/>
    <property type="match status" value="1"/>
</dbReference>
<dbReference type="FunFam" id="3.40.50.1360:FF:000001">
    <property type="entry name" value="Ribose-5-phosphate isomerase A"/>
    <property type="match status" value="1"/>
</dbReference>
<dbReference type="Gene3D" id="3.30.70.260">
    <property type="match status" value="1"/>
</dbReference>
<dbReference type="Gene3D" id="3.40.50.1360">
    <property type="match status" value="1"/>
</dbReference>
<dbReference type="HAMAP" id="MF_00170">
    <property type="entry name" value="Rib_5P_isom_A"/>
    <property type="match status" value="1"/>
</dbReference>
<dbReference type="InterPro" id="IPR037171">
    <property type="entry name" value="NagB/RpiA_transferase-like"/>
</dbReference>
<dbReference type="InterPro" id="IPR020672">
    <property type="entry name" value="Ribose5P_isomerase_typA_subgr"/>
</dbReference>
<dbReference type="InterPro" id="IPR004788">
    <property type="entry name" value="Ribose5P_isomerase_type_A"/>
</dbReference>
<dbReference type="NCBIfam" id="NF001924">
    <property type="entry name" value="PRK00702.1"/>
    <property type="match status" value="1"/>
</dbReference>
<dbReference type="NCBIfam" id="TIGR00021">
    <property type="entry name" value="rpiA"/>
    <property type="match status" value="1"/>
</dbReference>
<dbReference type="PANTHER" id="PTHR11934">
    <property type="entry name" value="RIBOSE-5-PHOSPHATE ISOMERASE"/>
    <property type="match status" value="1"/>
</dbReference>
<dbReference type="PANTHER" id="PTHR11934:SF0">
    <property type="entry name" value="RIBOSE-5-PHOSPHATE ISOMERASE"/>
    <property type="match status" value="1"/>
</dbReference>
<dbReference type="Pfam" id="PF06026">
    <property type="entry name" value="Rib_5-P_isom_A"/>
    <property type="match status" value="1"/>
</dbReference>
<dbReference type="SUPFAM" id="SSF75445">
    <property type="entry name" value="D-ribose-5-phosphate isomerase (RpiA), lid domain"/>
    <property type="match status" value="1"/>
</dbReference>
<dbReference type="SUPFAM" id="SSF100950">
    <property type="entry name" value="NagB/RpiA/CoA transferase-like"/>
    <property type="match status" value="1"/>
</dbReference>
<accession>Q5WCM4</accession>
<proteinExistence type="inferred from homology"/>
<gene>
    <name evidence="1" type="primary">rpiA</name>
    <name type="ordered locus">ABC3353</name>
</gene>
<name>RPIA_SHOC1</name>
<evidence type="ECO:0000255" key="1">
    <source>
        <dbReference type="HAMAP-Rule" id="MF_00170"/>
    </source>
</evidence>
<comment type="function">
    <text evidence="1">Catalyzes the reversible conversion of ribose-5-phosphate to ribulose 5-phosphate.</text>
</comment>
<comment type="catalytic activity">
    <reaction evidence="1">
        <text>aldehydo-D-ribose 5-phosphate = D-ribulose 5-phosphate</text>
        <dbReference type="Rhea" id="RHEA:14657"/>
        <dbReference type="ChEBI" id="CHEBI:58121"/>
        <dbReference type="ChEBI" id="CHEBI:58273"/>
        <dbReference type="EC" id="5.3.1.6"/>
    </reaction>
</comment>
<comment type="pathway">
    <text evidence="1">Carbohydrate degradation; pentose phosphate pathway; D-ribose 5-phosphate from D-ribulose 5-phosphate (non-oxidative stage): step 1/1.</text>
</comment>
<comment type="subunit">
    <text evidence="1">Homodimer.</text>
</comment>
<comment type="similarity">
    <text evidence="1">Belongs to the ribose 5-phosphate isomerase family.</text>
</comment>
<feature type="chain" id="PRO_0000158387" description="Ribose-5-phosphate isomerase A">
    <location>
        <begin position="1"/>
        <end position="228"/>
    </location>
</feature>
<feature type="active site" description="Proton acceptor" evidence="1">
    <location>
        <position position="103"/>
    </location>
</feature>
<feature type="binding site" evidence="1">
    <location>
        <begin position="26"/>
        <end position="29"/>
    </location>
    <ligand>
        <name>substrate</name>
    </ligand>
</feature>
<feature type="binding site" evidence="1">
    <location>
        <begin position="81"/>
        <end position="84"/>
    </location>
    <ligand>
        <name>substrate</name>
    </ligand>
</feature>
<feature type="binding site" evidence="1">
    <location>
        <begin position="94"/>
        <end position="97"/>
    </location>
    <ligand>
        <name>substrate</name>
    </ligand>
</feature>
<feature type="binding site" evidence="1">
    <location>
        <position position="121"/>
    </location>
    <ligand>
        <name>substrate</name>
    </ligand>
</feature>
<organism>
    <name type="scientific">Shouchella clausii (strain KSM-K16)</name>
    <name type="common">Alkalihalobacillus clausii</name>
    <dbReference type="NCBI Taxonomy" id="66692"/>
    <lineage>
        <taxon>Bacteria</taxon>
        <taxon>Bacillati</taxon>
        <taxon>Bacillota</taxon>
        <taxon>Bacilli</taxon>
        <taxon>Bacillales</taxon>
        <taxon>Bacillaceae</taxon>
        <taxon>Shouchella</taxon>
    </lineage>
</organism>
<keyword id="KW-0413">Isomerase</keyword>
<keyword id="KW-1185">Reference proteome</keyword>
<sequence length="228" mass="24496">MDQLKRMAAEAAAEYVKDGMKIGLGSGSTVFEFVRVLGEKAKEGLNIQAVAASRKTEALAKACGIHIIDFPTMEKLEVAFDGADEIAPGLMLLKGGGGSLLREKLVAAAAKRLVVLADESKLVEELGAFKLPVEIIPFGWETTAMRIEALGGVASLRQTGKSPFVSDNHNWILDCDFGNIRDPYSLHEKVKKLVGVVETGLFLDMACEAIVASKNGIHHITKGDEFNV</sequence>
<protein>
    <recommendedName>
        <fullName evidence="1">Ribose-5-phosphate isomerase A</fullName>
        <ecNumber evidence="1">5.3.1.6</ecNumber>
    </recommendedName>
    <alternativeName>
        <fullName evidence="1">Phosphoriboisomerase A</fullName>
        <shortName evidence="1">PRI</shortName>
    </alternativeName>
</protein>